<proteinExistence type="inferred from homology"/>
<organism>
    <name type="scientific">Leptospira biflexa serovar Patoc (strain Patoc 1 / Ames)</name>
    <dbReference type="NCBI Taxonomy" id="355278"/>
    <lineage>
        <taxon>Bacteria</taxon>
        <taxon>Pseudomonadati</taxon>
        <taxon>Spirochaetota</taxon>
        <taxon>Spirochaetia</taxon>
        <taxon>Leptospirales</taxon>
        <taxon>Leptospiraceae</taxon>
        <taxon>Leptospira</taxon>
    </lineage>
</organism>
<sequence>MEEVIVTQDRSSIGIIPMHKKTLIALGLKKKGQSKKHKMTPQLKGMLRQVGYLLKVEKV</sequence>
<keyword id="KW-0687">Ribonucleoprotein</keyword>
<keyword id="KW-0689">Ribosomal protein</keyword>
<accession>B0SA29</accession>
<name>RL30_LEPBA</name>
<evidence type="ECO:0000255" key="1">
    <source>
        <dbReference type="HAMAP-Rule" id="MF_01371"/>
    </source>
</evidence>
<evidence type="ECO:0000305" key="2"/>
<feature type="chain" id="PRO_1000144695" description="Large ribosomal subunit protein uL30">
    <location>
        <begin position="1"/>
        <end position="59"/>
    </location>
</feature>
<protein>
    <recommendedName>
        <fullName evidence="1">Large ribosomal subunit protein uL30</fullName>
    </recommendedName>
    <alternativeName>
        <fullName evidence="2">50S ribosomal protein L30</fullName>
    </alternativeName>
</protein>
<reference key="1">
    <citation type="journal article" date="2008" name="PLoS ONE">
        <title>Genome sequence of the saprophyte Leptospira biflexa provides insights into the evolution of Leptospira and the pathogenesis of leptospirosis.</title>
        <authorList>
            <person name="Picardeau M."/>
            <person name="Bulach D.M."/>
            <person name="Bouchier C."/>
            <person name="Zuerner R.L."/>
            <person name="Zidane N."/>
            <person name="Wilson P.J."/>
            <person name="Creno S."/>
            <person name="Kuczek E.S."/>
            <person name="Bommezzadri S."/>
            <person name="Davis J.C."/>
            <person name="McGrath A."/>
            <person name="Johnson M.J."/>
            <person name="Boursaux-Eude C."/>
            <person name="Seemann T."/>
            <person name="Rouy Z."/>
            <person name="Coppel R.L."/>
            <person name="Rood J.I."/>
            <person name="Lajus A."/>
            <person name="Davies J.K."/>
            <person name="Medigue C."/>
            <person name="Adler B."/>
        </authorList>
    </citation>
    <scope>NUCLEOTIDE SEQUENCE [LARGE SCALE GENOMIC DNA]</scope>
    <source>
        <strain>Patoc 1 / Ames</strain>
    </source>
</reference>
<dbReference type="EMBL" id="CP000777">
    <property type="protein sequence ID" value="ABZ94399.1"/>
    <property type="molecule type" value="Genomic_DNA"/>
</dbReference>
<dbReference type="RefSeq" id="WP_012388927.1">
    <property type="nucleotide sequence ID" value="NC_010842.1"/>
</dbReference>
<dbReference type="SMR" id="B0SA29"/>
<dbReference type="KEGG" id="lbf:LBF_1895"/>
<dbReference type="HOGENOM" id="CLU_131047_1_1_12"/>
<dbReference type="GO" id="GO:0015934">
    <property type="term" value="C:large ribosomal subunit"/>
    <property type="evidence" value="ECO:0007669"/>
    <property type="project" value="InterPro"/>
</dbReference>
<dbReference type="GO" id="GO:0003735">
    <property type="term" value="F:structural constituent of ribosome"/>
    <property type="evidence" value="ECO:0007669"/>
    <property type="project" value="InterPro"/>
</dbReference>
<dbReference type="GO" id="GO:0006412">
    <property type="term" value="P:translation"/>
    <property type="evidence" value="ECO:0007669"/>
    <property type="project" value="UniProtKB-UniRule"/>
</dbReference>
<dbReference type="Gene3D" id="3.30.1390.20">
    <property type="entry name" value="Ribosomal protein L30, ferredoxin-like fold domain"/>
    <property type="match status" value="1"/>
</dbReference>
<dbReference type="HAMAP" id="MF_01371_B">
    <property type="entry name" value="Ribosomal_uL30_B"/>
    <property type="match status" value="1"/>
</dbReference>
<dbReference type="InterPro" id="IPR036919">
    <property type="entry name" value="Ribo_uL30_ferredoxin-like_sf"/>
</dbReference>
<dbReference type="InterPro" id="IPR005996">
    <property type="entry name" value="Ribosomal_uL30_bac-type"/>
</dbReference>
<dbReference type="InterPro" id="IPR016082">
    <property type="entry name" value="Ribosomal_uL30_ferredoxin-like"/>
</dbReference>
<dbReference type="NCBIfam" id="TIGR01308">
    <property type="entry name" value="rpmD_bact"/>
    <property type="match status" value="1"/>
</dbReference>
<dbReference type="Pfam" id="PF00327">
    <property type="entry name" value="Ribosomal_L30"/>
    <property type="match status" value="1"/>
</dbReference>
<dbReference type="PIRSF" id="PIRSF002211">
    <property type="entry name" value="Ribosomal_L30_bac-type"/>
    <property type="match status" value="1"/>
</dbReference>
<dbReference type="SUPFAM" id="SSF55129">
    <property type="entry name" value="Ribosomal protein L30p/L7e"/>
    <property type="match status" value="1"/>
</dbReference>
<comment type="subunit">
    <text evidence="1">Part of the 50S ribosomal subunit.</text>
</comment>
<comment type="similarity">
    <text evidence="1">Belongs to the universal ribosomal protein uL30 family.</text>
</comment>
<gene>
    <name evidence="1" type="primary">rpmD</name>
    <name type="ordered locus">LBF_1895</name>
</gene>